<evidence type="ECO:0000255" key="1">
    <source>
        <dbReference type="HAMAP-Rule" id="MF_00358"/>
    </source>
</evidence>
<evidence type="ECO:0000305" key="2"/>
<gene>
    <name evidence="1" type="primary">rpsU</name>
    <name type="ordered locus">Desal_1608</name>
</gene>
<feature type="chain" id="PRO_1000205363" description="Small ribosomal subunit protein bS21">
    <location>
        <begin position="1"/>
        <end position="66"/>
    </location>
</feature>
<dbReference type="EMBL" id="CP001649">
    <property type="protein sequence ID" value="ACS79670.1"/>
    <property type="molecule type" value="Genomic_DNA"/>
</dbReference>
<dbReference type="RefSeq" id="WP_015336888.1">
    <property type="nucleotide sequence ID" value="NC_012881.1"/>
</dbReference>
<dbReference type="SMR" id="C6BSW6"/>
<dbReference type="STRING" id="526222.Desal_1608"/>
<dbReference type="KEGG" id="dsa:Desal_1608"/>
<dbReference type="eggNOG" id="COG0828">
    <property type="taxonomic scope" value="Bacteria"/>
</dbReference>
<dbReference type="HOGENOM" id="CLU_159258_1_2_7"/>
<dbReference type="OrthoDB" id="9799244at2"/>
<dbReference type="Proteomes" id="UP000002601">
    <property type="component" value="Chromosome"/>
</dbReference>
<dbReference type="GO" id="GO:1990904">
    <property type="term" value="C:ribonucleoprotein complex"/>
    <property type="evidence" value="ECO:0007669"/>
    <property type="project" value="UniProtKB-KW"/>
</dbReference>
<dbReference type="GO" id="GO:0005840">
    <property type="term" value="C:ribosome"/>
    <property type="evidence" value="ECO:0007669"/>
    <property type="project" value="UniProtKB-KW"/>
</dbReference>
<dbReference type="GO" id="GO:0003735">
    <property type="term" value="F:structural constituent of ribosome"/>
    <property type="evidence" value="ECO:0007669"/>
    <property type="project" value="InterPro"/>
</dbReference>
<dbReference type="GO" id="GO:0006412">
    <property type="term" value="P:translation"/>
    <property type="evidence" value="ECO:0007669"/>
    <property type="project" value="UniProtKB-UniRule"/>
</dbReference>
<dbReference type="Gene3D" id="1.20.5.1150">
    <property type="entry name" value="Ribosomal protein S8"/>
    <property type="match status" value="1"/>
</dbReference>
<dbReference type="HAMAP" id="MF_00358">
    <property type="entry name" value="Ribosomal_bS21"/>
    <property type="match status" value="1"/>
</dbReference>
<dbReference type="InterPro" id="IPR001911">
    <property type="entry name" value="Ribosomal_bS21"/>
</dbReference>
<dbReference type="InterPro" id="IPR018278">
    <property type="entry name" value="Ribosomal_bS21_CS"/>
</dbReference>
<dbReference type="InterPro" id="IPR038380">
    <property type="entry name" value="Ribosomal_bS21_sf"/>
</dbReference>
<dbReference type="NCBIfam" id="TIGR00030">
    <property type="entry name" value="S21p"/>
    <property type="match status" value="1"/>
</dbReference>
<dbReference type="PANTHER" id="PTHR21109">
    <property type="entry name" value="MITOCHONDRIAL 28S RIBOSOMAL PROTEIN S21"/>
    <property type="match status" value="1"/>
</dbReference>
<dbReference type="PANTHER" id="PTHR21109:SF22">
    <property type="entry name" value="SMALL RIBOSOMAL SUBUNIT PROTEIN BS21"/>
    <property type="match status" value="1"/>
</dbReference>
<dbReference type="Pfam" id="PF01165">
    <property type="entry name" value="Ribosomal_S21"/>
    <property type="match status" value="1"/>
</dbReference>
<dbReference type="PRINTS" id="PR00976">
    <property type="entry name" value="RIBOSOMALS21"/>
</dbReference>
<dbReference type="PROSITE" id="PS01181">
    <property type="entry name" value="RIBOSOMAL_S21"/>
    <property type="match status" value="1"/>
</dbReference>
<keyword id="KW-1185">Reference proteome</keyword>
<keyword id="KW-0687">Ribonucleoprotein</keyword>
<keyword id="KW-0689">Ribosomal protein</keyword>
<protein>
    <recommendedName>
        <fullName evidence="1">Small ribosomal subunit protein bS21</fullName>
    </recommendedName>
    <alternativeName>
        <fullName evidence="2">30S ribosomal protein S21</fullName>
    </alternativeName>
</protein>
<proteinExistence type="inferred from homology"/>
<comment type="similarity">
    <text evidence="1">Belongs to the bacterial ribosomal protein bS21 family.</text>
</comment>
<accession>C6BSW6</accession>
<organism>
    <name type="scientific">Maridesulfovibrio salexigens (strain ATCC 14822 / DSM 2638 / NCIMB 8403 / VKM B-1763)</name>
    <name type="common">Desulfovibrio salexigens</name>
    <dbReference type="NCBI Taxonomy" id="526222"/>
    <lineage>
        <taxon>Bacteria</taxon>
        <taxon>Pseudomonadati</taxon>
        <taxon>Thermodesulfobacteriota</taxon>
        <taxon>Desulfovibrionia</taxon>
        <taxon>Desulfovibrionales</taxon>
        <taxon>Desulfovibrionaceae</taxon>
        <taxon>Maridesulfovibrio</taxon>
    </lineage>
</organism>
<reference key="1">
    <citation type="submission" date="2009-06" db="EMBL/GenBank/DDBJ databases">
        <title>Complete sequence of Desulfovibrio salexigens DSM 2638.</title>
        <authorList>
            <consortium name="US DOE Joint Genome Institute"/>
            <person name="Lucas S."/>
            <person name="Copeland A."/>
            <person name="Lapidus A."/>
            <person name="Glavina del Rio T."/>
            <person name="Tice H."/>
            <person name="Bruce D."/>
            <person name="Goodwin L."/>
            <person name="Pitluck S."/>
            <person name="Munk A.C."/>
            <person name="Brettin T."/>
            <person name="Detter J.C."/>
            <person name="Han C."/>
            <person name="Tapia R."/>
            <person name="Larimer F."/>
            <person name="Land M."/>
            <person name="Hauser L."/>
            <person name="Kyrpides N."/>
            <person name="Anderson I."/>
            <person name="Wall J.D."/>
            <person name="Arkin A.P."/>
            <person name="Dehal P."/>
            <person name="Chivian D."/>
            <person name="Giles B."/>
            <person name="Hazen T.C."/>
        </authorList>
    </citation>
    <scope>NUCLEOTIDE SEQUENCE [LARGE SCALE GENOMIC DNA]</scope>
    <source>
        <strain>ATCC 14822 / DSM 2638 / NCIMB 8403 / VKM B-1763</strain>
    </source>
</reference>
<sequence>MPGVYLEDSDNFEIALRRFKKQVEKAGVLSELKKRQHYEKPSVQRKKKKAAARKRLIKKMRKMSMG</sequence>
<name>RS21_MARSD</name>